<comment type="function">
    <text evidence="1">Catalyzes the ATP-dependent 2-thiolation of cytidine in position 32 of tRNA, to form 2-thiocytidine (s(2)C32). The sulfur atoms are provided by the cysteine/cysteine desulfurase (IscS) system.</text>
</comment>
<comment type="catalytic activity">
    <reaction evidence="1">
        <text>cytidine(32) in tRNA + S-sulfanyl-L-cysteinyl-[cysteine desulfurase] + AH2 + ATP = 2-thiocytidine(32) in tRNA + L-cysteinyl-[cysteine desulfurase] + A + AMP + diphosphate + H(+)</text>
        <dbReference type="Rhea" id="RHEA:57048"/>
        <dbReference type="Rhea" id="RHEA-COMP:10288"/>
        <dbReference type="Rhea" id="RHEA-COMP:12157"/>
        <dbReference type="Rhea" id="RHEA-COMP:12158"/>
        <dbReference type="Rhea" id="RHEA-COMP:14821"/>
        <dbReference type="ChEBI" id="CHEBI:13193"/>
        <dbReference type="ChEBI" id="CHEBI:15378"/>
        <dbReference type="ChEBI" id="CHEBI:17499"/>
        <dbReference type="ChEBI" id="CHEBI:29950"/>
        <dbReference type="ChEBI" id="CHEBI:30616"/>
        <dbReference type="ChEBI" id="CHEBI:33019"/>
        <dbReference type="ChEBI" id="CHEBI:61963"/>
        <dbReference type="ChEBI" id="CHEBI:82748"/>
        <dbReference type="ChEBI" id="CHEBI:141453"/>
        <dbReference type="ChEBI" id="CHEBI:456215"/>
    </reaction>
    <physiologicalReaction direction="left-to-right" evidence="1">
        <dbReference type="Rhea" id="RHEA:57049"/>
    </physiologicalReaction>
</comment>
<comment type="cofactor">
    <cofactor evidence="1">
        <name>Mg(2+)</name>
        <dbReference type="ChEBI" id="CHEBI:18420"/>
    </cofactor>
</comment>
<comment type="cofactor">
    <cofactor evidence="1">
        <name>[4Fe-4S] cluster</name>
        <dbReference type="ChEBI" id="CHEBI:49883"/>
    </cofactor>
    <text evidence="1">Binds 1 [4Fe-4S] cluster per subunit. The cluster is chelated by three Cys residues, the fourth Fe has a free coordination site that may bind a sulfur atom transferred from the persulfide of IscS.</text>
</comment>
<comment type="pathway">
    <text evidence="1">tRNA modification.</text>
</comment>
<comment type="subunit">
    <text evidence="1">Homodimer.</text>
</comment>
<comment type="subcellular location">
    <subcellularLocation>
        <location evidence="1">Cytoplasm</location>
    </subcellularLocation>
</comment>
<comment type="miscellaneous">
    <text evidence="1">The thiolation reaction likely consists of two steps: a first activation step by ATP to form an adenylated intermediate of the target base of tRNA, and a second nucleophilic substitution step of the sulfur (S) atom supplied by the hydrosulfide attached to the Fe-S cluster.</text>
</comment>
<comment type="similarity">
    <text evidence="1">Belongs to the TtcA family.</text>
</comment>
<sequence length="311" mass="35515">MQENQQITKKEQYNLNKLQKRLRRNVGEAIADFNMIEEGDRIMVCLSGGKDSYTMLEILRNLQQSAPINFSLVAVNLDQKQPGFPEHVLPEYLEKLGVEYKIVEENTYGIVKEKIPEGKTTCSLCSRLRRGILYRTATELGATKIALGHHRDDILQTLFLNMFYGGKMKGMPPKLMSDDGKHIVIRPLAYCREKDIQRFADAKAFPIIPCNLCGSQPNLQRQVIADMLRDWDKRYPGRIETMFSAMQNVVPSHLCDTNLFDFKGITHGSEVVNGGDLAFDREEIPLQPAGWQPEEDENQLDELRLNVVEVK</sequence>
<gene>
    <name evidence="1" type="primary">ttcA</name>
    <name type="ordered locus">Z2416</name>
    <name type="ordered locus">ECs1928</name>
</gene>
<keyword id="KW-0004">4Fe-4S</keyword>
<keyword id="KW-0067">ATP-binding</keyword>
<keyword id="KW-0963">Cytoplasm</keyword>
<keyword id="KW-0408">Iron</keyword>
<keyword id="KW-0411">Iron-sulfur</keyword>
<keyword id="KW-0460">Magnesium</keyword>
<keyword id="KW-0479">Metal-binding</keyword>
<keyword id="KW-0547">Nucleotide-binding</keyword>
<keyword id="KW-1185">Reference proteome</keyword>
<keyword id="KW-0694">RNA-binding</keyword>
<keyword id="KW-0808">Transferase</keyword>
<keyword id="KW-0819">tRNA processing</keyword>
<keyword id="KW-0820">tRNA-binding</keyword>
<reference key="1">
    <citation type="journal article" date="2007" name="BMC Genomics">
        <title>Genome evolution in major Escherichia coli O157:H7 lineages.</title>
        <authorList>
            <person name="Zhang Y."/>
            <person name="Laing C."/>
            <person name="Steele M."/>
            <person name="Ziebell K."/>
            <person name="Johnson R."/>
            <person name="Benson A.K."/>
            <person name="Taboada E."/>
            <person name="Gannon V.P.J."/>
        </authorList>
    </citation>
    <scope>NUCLEOTIDE SEQUENCE [GENOMIC DNA]</scope>
    <source>
        <strain>O157:H7 / Frik920</strain>
    </source>
</reference>
<reference key="2">
    <citation type="journal article" date="2001" name="Nature">
        <title>Genome sequence of enterohaemorrhagic Escherichia coli O157:H7.</title>
        <authorList>
            <person name="Perna N.T."/>
            <person name="Plunkett G. III"/>
            <person name="Burland V."/>
            <person name="Mau B."/>
            <person name="Glasner J.D."/>
            <person name="Rose D.J."/>
            <person name="Mayhew G.F."/>
            <person name="Evans P.S."/>
            <person name="Gregor J."/>
            <person name="Kirkpatrick H.A."/>
            <person name="Posfai G."/>
            <person name="Hackett J."/>
            <person name="Klink S."/>
            <person name="Boutin A."/>
            <person name="Shao Y."/>
            <person name="Miller L."/>
            <person name="Grotbeck E.J."/>
            <person name="Davis N.W."/>
            <person name="Lim A."/>
            <person name="Dimalanta E.T."/>
            <person name="Potamousis K."/>
            <person name="Apodaca J."/>
            <person name="Anantharaman T.S."/>
            <person name="Lin J."/>
            <person name="Yen G."/>
            <person name="Schwartz D.C."/>
            <person name="Welch R.A."/>
            <person name="Blattner F.R."/>
        </authorList>
    </citation>
    <scope>NUCLEOTIDE SEQUENCE [LARGE SCALE GENOMIC DNA]</scope>
    <source>
        <strain>O157:H7 / EDL933 / ATCC 700927 / EHEC</strain>
    </source>
</reference>
<reference key="3">
    <citation type="journal article" date="2001" name="DNA Res.">
        <title>Complete genome sequence of enterohemorrhagic Escherichia coli O157:H7 and genomic comparison with a laboratory strain K-12.</title>
        <authorList>
            <person name="Hayashi T."/>
            <person name="Makino K."/>
            <person name="Ohnishi M."/>
            <person name="Kurokawa K."/>
            <person name="Ishii K."/>
            <person name="Yokoyama K."/>
            <person name="Han C.-G."/>
            <person name="Ohtsubo E."/>
            <person name="Nakayama K."/>
            <person name="Murata T."/>
            <person name="Tanaka M."/>
            <person name="Tobe T."/>
            <person name="Iida T."/>
            <person name="Takami H."/>
            <person name="Honda T."/>
            <person name="Sasakawa C."/>
            <person name="Ogasawara N."/>
            <person name="Yasunaga T."/>
            <person name="Kuhara S."/>
            <person name="Shiba T."/>
            <person name="Hattori M."/>
            <person name="Shinagawa H."/>
        </authorList>
    </citation>
    <scope>NUCLEOTIDE SEQUENCE [LARGE SCALE GENOMIC DNA]</scope>
    <source>
        <strain>O157:H7 / Sakai / RIMD 0509952 / EHEC</strain>
    </source>
</reference>
<dbReference type="EC" id="2.8.1.-" evidence="1"/>
<dbReference type="EMBL" id="EF112441">
    <property type="protein sequence ID" value="ABM54890.1"/>
    <property type="molecule type" value="Genomic_DNA"/>
</dbReference>
<dbReference type="EMBL" id="AE005174">
    <property type="protein sequence ID" value="AAG56453.1"/>
    <property type="molecule type" value="Genomic_DNA"/>
</dbReference>
<dbReference type="EMBL" id="BA000007">
    <property type="protein sequence ID" value="BAB35351.1"/>
    <property type="molecule type" value="Genomic_DNA"/>
</dbReference>
<dbReference type="PIR" id="A85749">
    <property type="entry name" value="A85749"/>
</dbReference>
<dbReference type="PIR" id="H90869">
    <property type="entry name" value="H90869"/>
</dbReference>
<dbReference type="RefSeq" id="NP_309955.1">
    <property type="nucleotide sequence ID" value="NC_002695.1"/>
</dbReference>
<dbReference type="RefSeq" id="WP_001157407.1">
    <property type="nucleotide sequence ID" value="NZ_SDVX01000007.1"/>
</dbReference>
<dbReference type="SMR" id="Q8X8Q5"/>
<dbReference type="STRING" id="155864.Z2416"/>
<dbReference type="GeneID" id="912308"/>
<dbReference type="GeneID" id="93775481"/>
<dbReference type="KEGG" id="ece:Z2416"/>
<dbReference type="KEGG" id="ecs:ECs_1928"/>
<dbReference type="PATRIC" id="fig|386585.9.peg.2036"/>
<dbReference type="eggNOG" id="COG0037">
    <property type="taxonomic scope" value="Bacteria"/>
</dbReference>
<dbReference type="HOGENOM" id="CLU_026481_0_0_6"/>
<dbReference type="OMA" id="IGHNLDD"/>
<dbReference type="Proteomes" id="UP000000558">
    <property type="component" value="Chromosome"/>
</dbReference>
<dbReference type="Proteomes" id="UP000002519">
    <property type="component" value="Chromosome"/>
</dbReference>
<dbReference type="GO" id="GO:0005737">
    <property type="term" value="C:cytoplasm"/>
    <property type="evidence" value="ECO:0007669"/>
    <property type="project" value="UniProtKB-SubCell"/>
</dbReference>
<dbReference type="GO" id="GO:0051539">
    <property type="term" value="F:4 iron, 4 sulfur cluster binding"/>
    <property type="evidence" value="ECO:0007669"/>
    <property type="project" value="UniProtKB-UniRule"/>
</dbReference>
<dbReference type="GO" id="GO:0005524">
    <property type="term" value="F:ATP binding"/>
    <property type="evidence" value="ECO:0007669"/>
    <property type="project" value="UniProtKB-UniRule"/>
</dbReference>
<dbReference type="GO" id="GO:0000287">
    <property type="term" value="F:magnesium ion binding"/>
    <property type="evidence" value="ECO:0007669"/>
    <property type="project" value="UniProtKB-UniRule"/>
</dbReference>
<dbReference type="GO" id="GO:0016783">
    <property type="term" value="F:sulfurtransferase activity"/>
    <property type="evidence" value="ECO:0007669"/>
    <property type="project" value="UniProtKB-UniRule"/>
</dbReference>
<dbReference type="GO" id="GO:0000049">
    <property type="term" value="F:tRNA binding"/>
    <property type="evidence" value="ECO:0007669"/>
    <property type="project" value="UniProtKB-KW"/>
</dbReference>
<dbReference type="GO" id="GO:0034227">
    <property type="term" value="P:tRNA thio-modification"/>
    <property type="evidence" value="ECO:0007669"/>
    <property type="project" value="UniProtKB-UniRule"/>
</dbReference>
<dbReference type="CDD" id="cd24138">
    <property type="entry name" value="TtcA-like"/>
    <property type="match status" value="1"/>
</dbReference>
<dbReference type="FunFam" id="3.40.50.620:FF:000046">
    <property type="entry name" value="tRNA-cytidine(32) 2-sulfurtransferase"/>
    <property type="match status" value="1"/>
</dbReference>
<dbReference type="Gene3D" id="3.40.50.620">
    <property type="entry name" value="HUPs"/>
    <property type="match status" value="1"/>
</dbReference>
<dbReference type="HAMAP" id="MF_01850">
    <property type="entry name" value="TtcA"/>
    <property type="match status" value="1"/>
</dbReference>
<dbReference type="InterPro" id="IPR014729">
    <property type="entry name" value="Rossmann-like_a/b/a_fold"/>
</dbReference>
<dbReference type="InterPro" id="IPR011063">
    <property type="entry name" value="TilS/TtcA_N"/>
</dbReference>
<dbReference type="InterPro" id="IPR012089">
    <property type="entry name" value="tRNA_Cyd_32_2_STrfase"/>
</dbReference>
<dbReference type="InterPro" id="IPR035107">
    <property type="entry name" value="tRNA_thiolation_TtcA_Ctu1"/>
</dbReference>
<dbReference type="NCBIfam" id="NF007972">
    <property type="entry name" value="PRK10696.1"/>
    <property type="match status" value="1"/>
</dbReference>
<dbReference type="PANTHER" id="PTHR43686:SF1">
    <property type="entry name" value="AMINOTRAN_5 DOMAIN-CONTAINING PROTEIN"/>
    <property type="match status" value="1"/>
</dbReference>
<dbReference type="PANTHER" id="PTHR43686">
    <property type="entry name" value="SULFURTRANSFERASE-RELATED"/>
    <property type="match status" value="1"/>
</dbReference>
<dbReference type="Pfam" id="PF01171">
    <property type="entry name" value="ATP_bind_3"/>
    <property type="match status" value="1"/>
</dbReference>
<dbReference type="PIRSF" id="PIRSF004976">
    <property type="entry name" value="ATPase_YdaO"/>
    <property type="match status" value="1"/>
</dbReference>
<dbReference type="SUPFAM" id="SSF52402">
    <property type="entry name" value="Adenine nucleotide alpha hydrolases-like"/>
    <property type="match status" value="1"/>
</dbReference>
<accession>Q8X8Q5</accession>
<accession>A1YN31</accession>
<accession>Q7AEF1</accession>
<proteinExistence type="inferred from homology"/>
<organism>
    <name type="scientific">Escherichia coli O157:H7</name>
    <dbReference type="NCBI Taxonomy" id="83334"/>
    <lineage>
        <taxon>Bacteria</taxon>
        <taxon>Pseudomonadati</taxon>
        <taxon>Pseudomonadota</taxon>
        <taxon>Gammaproteobacteria</taxon>
        <taxon>Enterobacterales</taxon>
        <taxon>Enterobacteriaceae</taxon>
        <taxon>Escherichia</taxon>
    </lineage>
</organism>
<name>TTCA_ECO57</name>
<feature type="chain" id="PRO_0000348722" description="tRNA-cytidine(32) 2-sulfurtransferase">
    <location>
        <begin position="1"/>
        <end position="311"/>
    </location>
</feature>
<feature type="short sequence motif" description="PP-loop motif" evidence="1">
    <location>
        <begin position="47"/>
        <end position="52"/>
    </location>
</feature>
<feature type="binding site" evidence="1">
    <location>
        <position position="122"/>
    </location>
    <ligand>
        <name>[4Fe-4S] cluster</name>
        <dbReference type="ChEBI" id="CHEBI:49883"/>
    </ligand>
</feature>
<feature type="binding site" evidence="1">
    <location>
        <position position="125"/>
    </location>
    <ligand>
        <name>[4Fe-4S] cluster</name>
        <dbReference type="ChEBI" id="CHEBI:49883"/>
    </ligand>
</feature>
<feature type="binding site" evidence="1">
    <location>
        <position position="213"/>
    </location>
    <ligand>
        <name>[4Fe-4S] cluster</name>
        <dbReference type="ChEBI" id="CHEBI:49883"/>
    </ligand>
</feature>
<feature type="sequence conflict" description="In Ref. 1; ABM54890." evidence="2" ref="1">
    <original>QE</original>
    <variation>SQ</variation>
    <location>
        <begin position="2"/>
        <end position="3"/>
    </location>
</feature>
<feature type="sequence conflict" description="In Ref. 1; ABM54890." evidence="2" ref="1">
    <original>QIT</original>
    <variation>EIS</variation>
    <location>
        <begin position="6"/>
        <end position="8"/>
    </location>
</feature>
<protein>
    <recommendedName>
        <fullName evidence="1">tRNA-cytidine(32) 2-sulfurtransferase</fullName>
        <ecNumber evidence="1">2.8.1.-</ecNumber>
    </recommendedName>
    <alternativeName>
        <fullName evidence="1">Two-thiocytidine biosynthesis protein A</fullName>
    </alternativeName>
    <alternativeName>
        <fullName evidence="1">tRNA 2-thiocytidine biosynthesis protein TtcA</fullName>
    </alternativeName>
</protein>
<evidence type="ECO:0000255" key="1">
    <source>
        <dbReference type="HAMAP-Rule" id="MF_01850"/>
    </source>
</evidence>
<evidence type="ECO:0000305" key="2"/>